<proteinExistence type="inferred from homology"/>
<comment type="function">
    <text evidence="1">Potential disease resistance protein.</text>
</comment>
<comment type="domain">
    <text evidence="1">The LRR repeats probably act as specificity determinant of pathogen recognition.</text>
</comment>
<comment type="similarity">
    <text evidence="3">Belongs to the disease resistance NB-LRR family.</text>
</comment>
<comment type="online information" name="NIB-LRRS">
    <link uri="http://niblrrs.ucdavis.edu"/>
    <text>Functional and comparative genomics of disease resistance gene homologs</text>
</comment>
<reference key="1">
    <citation type="journal article" date="2000" name="DNA Res.">
        <title>Structural analysis of Arabidopsis thaliana chromosome 5. X. Sequence features of the regions of 3,076,755 bp covered by sixty P1 and TAC clones.</title>
        <authorList>
            <person name="Sato S."/>
            <person name="Nakamura Y."/>
            <person name="Kaneko T."/>
            <person name="Katoh T."/>
            <person name="Asamizu E."/>
            <person name="Kotani H."/>
            <person name="Tabata S."/>
        </authorList>
    </citation>
    <scope>NUCLEOTIDE SEQUENCE [LARGE SCALE GENOMIC DNA]</scope>
    <source>
        <strain>cv. Columbia</strain>
    </source>
</reference>
<reference key="2">
    <citation type="journal article" date="2017" name="Plant J.">
        <title>Araport11: a complete reannotation of the Arabidopsis thaliana reference genome.</title>
        <authorList>
            <person name="Cheng C.Y."/>
            <person name="Krishnakumar V."/>
            <person name="Chan A.P."/>
            <person name="Thibaud-Nissen F."/>
            <person name="Schobel S."/>
            <person name="Town C.D."/>
        </authorList>
    </citation>
    <scope>GENOME REANNOTATION</scope>
    <source>
        <strain>cv. Columbia</strain>
    </source>
</reference>
<name>DRL39_ARATH</name>
<dbReference type="EMBL" id="AB018117">
    <property type="protein sequence ID" value="BAA97162.1"/>
    <property type="molecule type" value="Genomic_DNA"/>
</dbReference>
<dbReference type="EMBL" id="CP002688">
    <property type="protein sequence ID" value="AED95493.1"/>
    <property type="molecule type" value="Genomic_DNA"/>
</dbReference>
<dbReference type="RefSeq" id="NP_199539.1">
    <property type="nucleotide sequence ID" value="NM_124099.1"/>
</dbReference>
<dbReference type="SMR" id="Q9LVT1"/>
<dbReference type="STRING" id="3702.Q9LVT1"/>
<dbReference type="PaxDb" id="3702-AT5G47280.1"/>
<dbReference type="EnsemblPlants" id="AT5G47280.1">
    <property type="protein sequence ID" value="AT5G47280.1"/>
    <property type="gene ID" value="AT5G47280"/>
</dbReference>
<dbReference type="GeneID" id="834775"/>
<dbReference type="Gramene" id="AT5G47280.1">
    <property type="protein sequence ID" value="AT5G47280.1"/>
    <property type="gene ID" value="AT5G47280"/>
</dbReference>
<dbReference type="KEGG" id="ath:AT5G47280"/>
<dbReference type="Araport" id="AT5G47280"/>
<dbReference type="TAIR" id="AT5G47280">
    <property type="gene designation" value="ADR1-L3"/>
</dbReference>
<dbReference type="eggNOG" id="ENOG502QU6E">
    <property type="taxonomic scope" value="Eukaryota"/>
</dbReference>
<dbReference type="HOGENOM" id="CLU_012216_1_0_1"/>
<dbReference type="InParanoid" id="Q9LVT1"/>
<dbReference type="OMA" id="VINHGTT"/>
<dbReference type="PhylomeDB" id="Q9LVT1"/>
<dbReference type="PHI-base" id="PHI:2391"/>
<dbReference type="PRO" id="PR:Q9LVT1"/>
<dbReference type="Proteomes" id="UP000006548">
    <property type="component" value="Chromosome 5"/>
</dbReference>
<dbReference type="GO" id="GO:0043531">
    <property type="term" value="F:ADP binding"/>
    <property type="evidence" value="ECO:0007669"/>
    <property type="project" value="InterPro"/>
</dbReference>
<dbReference type="GO" id="GO:0005524">
    <property type="term" value="F:ATP binding"/>
    <property type="evidence" value="ECO:0007669"/>
    <property type="project" value="UniProtKB-KW"/>
</dbReference>
<dbReference type="GO" id="GO:0006952">
    <property type="term" value="P:defense response"/>
    <property type="evidence" value="ECO:0007669"/>
    <property type="project" value="UniProtKB-KW"/>
</dbReference>
<dbReference type="FunFam" id="3.80.10.10:FF:001428">
    <property type="entry name" value="Probable disease resistance protein At5g04720"/>
    <property type="match status" value="1"/>
</dbReference>
<dbReference type="Gene3D" id="1.10.8.430">
    <property type="entry name" value="Helical domain of apoptotic protease-activating factors"/>
    <property type="match status" value="1"/>
</dbReference>
<dbReference type="Gene3D" id="3.40.50.300">
    <property type="entry name" value="P-loop containing nucleotide triphosphate hydrolases"/>
    <property type="match status" value="1"/>
</dbReference>
<dbReference type="Gene3D" id="3.80.10.10">
    <property type="entry name" value="Ribonuclease Inhibitor"/>
    <property type="match status" value="1"/>
</dbReference>
<dbReference type="Gene3D" id="1.10.10.10">
    <property type="entry name" value="Winged helix-like DNA-binding domain superfamily/Winged helix DNA-binding domain"/>
    <property type="match status" value="1"/>
</dbReference>
<dbReference type="InterPro" id="IPR042197">
    <property type="entry name" value="Apaf_helical"/>
</dbReference>
<dbReference type="InterPro" id="IPR032675">
    <property type="entry name" value="LRR_dom_sf"/>
</dbReference>
<dbReference type="InterPro" id="IPR002182">
    <property type="entry name" value="NB-ARC"/>
</dbReference>
<dbReference type="InterPro" id="IPR027417">
    <property type="entry name" value="P-loop_NTPase"/>
</dbReference>
<dbReference type="InterPro" id="IPR036388">
    <property type="entry name" value="WH-like_DNA-bd_sf"/>
</dbReference>
<dbReference type="PANTHER" id="PTHR36766:SF25">
    <property type="entry name" value="DISEASE RESISTANCE PROTEIN ADR1"/>
    <property type="match status" value="1"/>
</dbReference>
<dbReference type="PANTHER" id="PTHR36766">
    <property type="entry name" value="PLANT BROAD-SPECTRUM MILDEW RESISTANCE PROTEIN RPW8"/>
    <property type="match status" value="1"/>
</dbReference>
<dbReference type="Pfam" id="PF00931">
    <property type="entry name" value="NB-ARC"/>
    <property type="match status" value="1"/>
</dbReference>
<dbReference type="PRINTS" id="PR00364">
    <property type="entry name" value="DISEASERSIST"/>
</dbReference>
<dbReference type="SUPFAM" id="SSF52058">
    <property type="entry name" value="L domain-like"/>
    <property type="match status" value="1"/>
</dbReference>
<dbReference type="SUPFAM" id="SSF52540">
    <property type="entry name" value="P-loop containing nucleoside triphosphate hydrolases"/>
    <property type="match status" value="1"/>
</dbReference>
<feature type="chain" id="PRO_0000212771" description="Putative disease resistance protein At5g47280">
    <location>
        <begin position="1"/>
        <end position="623"/>
    </location>
</feature>
<feature type="domain" description="NB-ARC 1">
    <location>
        <begin position="2"/>
        <end position="51"/>
    </location>
</feature>
<feature type="domain" description="NB-ARC 2">
    <location>
        <begin position="119"/>
        <end position="249"/>
    </location>
</feature>
<feature type="repeat" description="LRR 1">
    <location>
        <begin position="488"/>
        <end position="511"/>
    </location>
</feature>
<feature type="repeat" description="LRR 2">
    <location>
        <begin position="512"/>
        <end position="534"/>
    </location>
</feature>
<feature type="repeat" description="LRR 3">
    <location>
        <begin position="536"/>
        <end position="558"/>
    </location>
</feature>
<feature type="repeat" description="LRR 4">
    <location>
        <begin position="560"/>
        <end position="581"/>
    </location>
</feature>
<feature type="binding site" evidence="2">
    <location>
        <begin position="16"/>
        <end position="23"/>
    </location>
    <ligand>
        <name>ATP</name>
        <dbReference type="ChEBI" id="CHEBI:30616"/>
    </ligand>
</feature>
<gene>
    <name type="ordered locus">At5g47280</name>
    <name type="ORF">MQL5.14</name>
</gene>
<protein>
    <recommendedName>
        <fullName>Putative disease resistance protein At5g47280</fullName>
    </recommendedName>
</protein>
<sequence length="623" mass="70082">MLFNLNDEARIIGISGMIGSGKTILAKELARDEEVRGHFANRVLFLTVSQSPNLEELRSLIRDFLTGHEAGFGTALPESVGHTRKLVILDDVRTRESLDQLMFNIPGTTTLVVSQSKLVDPRTTYDVELLNEHDATSLFCLSAFNQKSVPSGFSKSLVKQVVGESKGLPLSLKVLGASLNDRPETYWAIAVERLSRGEPVDETHESKVFAQIEATLENLDPKTKECFLDMGAFPEGKKIPVDVLINMLVKIHDLEDAAAFDVLVDLANRNLLTLVKDPTFVAMGTSYYDIFVTQHDVLRDVALHLTNRGKVSRRDRLLMPKRETMLPSEWERSNDEPYNARVVSIHTGEMTEMDWFDMDFPKAEVLIVNFSSDNYVLPPFIAKMGMLRVFVIINNGTSPAHLHDFPIPTSLTNLRSLWLERVHVPELSSSMIPLKNLHKLYLIICKINNSFDQTAIDIAQIFPKLTDITIDYCDDLAELPSTICGITSLNSISITNCPNIKELPKNISKLQALQLLRLYACPELKSLPVEICELPRLVYVDISHCLSLSSLPEKIGNVRTLEKIDMRECSLSSIPSSAVSLTSLCYVTCYREALWMWKEVEKAVPGLRIEATEKWFNMTWPDE</sequence>
<keyword id="KW-0067">ATP-binding</keyword>
<keyword id="KW-0433">Leucine-rich repeat</keyword>
<keyword id="KW-0547">Nucleotide-binding</keyword>
<keyword id="KW-0611">Plant defense</keyword>
<keyword id="KW-1185">Reference proteome</keyword>
<keyword id="KW-0677">Repeat</keyword>
<accession>Q9LVT1</accession>
<evidence type="ECO:0000250" key="1"/>
<evidence type="ECO:0000255" key="2"/>
<evidence type="ECO:0000305" key="3"/>
<organism>
    <name type="scientific">Arabidopsis thaliana</name>
    <name type="common">Mouse-ear cress</name>
    <dbReference type="NCBI Taxonomy" id="3702"/>
    <lineage>
        <taxon>Eukaryota</taxon>
        <taxon>Viridiplantae</taxon>
        <taxon>Streptophyta</taxon>
        <taxon>Embryophyta</taxon>
        <taxon>Tracheophyta</taxon>
        <taxon>Spermatophyta</taxon>
        <taxon>Magnoliopsida</taxon>
        <taxon>eudicotyledons</taxon>
        <taxon>Gunneridae</taxon>
        <taxon>Pentapetalae</taxon>
        <taxon>rosids</taxon>
        <taxon>malvids</taxon>
        <taxon>Brassicales</taxon>
        <taxon>Brassicaceae</taxon>
        <taxon>Camelineae</taxon>
        <taxon>Arabidopsis</taxon>
    </lineage>
</organism>